<comment type="function">
    <text evidence="1">An essential GTPase that binds both GDP and GTP, with rapid nucleotide exchange. Plays a role in 16S rRNA processing and 30S ribosomal subunit biogenesis and possibly also in cell cycle regulation and energy metabolism.</text>
</comment>
<comment type="subunit">
    <text evidence="1">Monomer.</text>
</comment>
<comment type="subcellular location">
    <subcellularLocation>
        <location>Cytoplasm</location>
    </subcellularLocation>
    <subcellularLocation>
        <location evidence="1">Cell inner membrane</location>
        <topology evidence="1">Peripheral membrane protein</topology>
    </subcellularLocation>
</comment>
<comment type="similarity">
    <text evidence="1 2">Belongs to the TRAFAC class TrmE-Era-EngA-EngB-Septin-like GTPase superfamily. Era GTPase family.</text>
</comment>
<sequence length="301" mass="33854">MSTDKTYCGFIAIVGRPNVGKSTLLNKLLGQKISITSRKAQTTRHRIVGIHTEGPYQAIYVDTPGLHMEEKRAINRLMNKAASSSIGDVELVIFVVEGTRWTPDDEMVLNKLRDGKAPVILAVNKVDNVQEKADLLPHLQFLASQMNFLDIVPISAETGMNVDTIAGIVRKHLPEAIHHFPEDYITDRSQRFMASEIIREKLMRFLGAELPYSVTVEIERFVTNERGGYDINGLILVEREGQKKMVIGNKGAKIKTIGIEARKDMQEMFEAPVHLELWVKVKSGWADDERALRSLGYVDDL</sequence>
<reference key="1">
    <citation type="journal article" date="2009" name="PLoS ONE">
        <title>Salmonella paratyphi C: genetic divergence from Salmonella choleraesuis and pathogenic convergence with Salmonella typhi.</title>
        <authorList>
            <person name="Liu W.-Q."/>
            <person name="Feng Y."/>
            <person name="Wang Y."/>
            <person name="Zou Q.-H."/>
            <person name="Chen F."/>
            <person name="Guo J.-T."/>
            <person name="Peng Y.-H."/>
            <person name="Jin Y."/>
            <person name="Li Y.-G."/>
            <person name="Hu S.-N."/>
            <person name="Johnston R.N."/>
            <person name="Liu G.-R."/>
            <person name="Liu S.-L."/>
        </authorList>
    </citation>
    <scope>NUCLEOTIDE SEQUENCE [LARGE SCALE GENOMIC DNA]</scope>
    <source>
        <strain>RKS4594</strain>
    </source>
</reference>
<dbReference type="EMBL" id="CP000857">
    <property type="protein sequence ID" value="ACN45235.1"/>
    <property type="molecule type" value="Genomic_DNA"/>
</dbReference>
<dbReference type="RefSeq" id="WP_000102230.1">
    <property type="nucleotide sequence ID" value="NC_012125.1"/>
</dbReference>
<dbReference type="SMR" id="C0PYG8"/>
<dbReference type="KEGG" id="sei:SPC_1069"/>
<dbReference type="HOGENOM" id="CLU_038009_1_2_6"/>
<dbReference type="Proteomes" id="UP000001599">
    <property type="component" value="Chromosome"/>
</dbReference>
<dbReference type="GO" id="GO:0005829">
    <property type="term" value="C:cytosol"/>
    <property type="evidence" value="ECO:0007669"/>
    <property type="project" value="TreeGrafter"/>
</dbReference>
<dbReference type="GO" id="GO:0005886">
    <property type="term" value="C:plasma membrane"/>
    <property type="evidence" value="ECO:0007669"/>
    <property type="project" value="UniProtKB-SubCell"/>
</dbReference>
<dbReference type="GO" id="GO:0005525">
    <property type="term" value="F:GTP binding"/>
    <property type="evidence" value="ECO:0007669"/>
    <property type="project" value="UniProtKB-UniRule"/>
</dbReference>
<dbReference type="GO" id="GO:0003924">
    <property type="term" value="F:GTPase activity"/>
    <property type="evidence" value="ECO:0007669"/>
    <property type="project" value="UniProtKB-UniRule"/>
</dbReference>
<dbReference type="GO" id="GO:0043024">
    <property type="term" value="F:ribosomal small subunit binding"/>
    <property type="evidence" value="ECO:0007669"/>
    <property type="project" value="TreeGrafter"/>
</dbReference>
<dbReference type="GO" id="GO:0070181">
    <property type="term" value="F:small ribosomal subunit rRNA binding"/>
    <property type="evidence" value="ECO:0007669"/>
    <property type="project" value="UniProtKB-UniRule"/>
</dbReference>
<dbReference type="GO" id="GO:0000028">
    <property type="term" value="P:ribosomal small subunit assembly"/>
    <property type="evidence" value="ECO:0007669"/>
    <property type="project" value="TreeGrafter"/>
</dbReference>
<dbReference type="CDD" id="cd04163">
    <property type="entry name" value="Era"/>
    <property type="match status" value="1"/>
</dbReference>
<dbReference type="CDD" id="cd22534">
    <property type="entry name" value="KH-II_Era"/>
    <property type="match status" value="1"/>
</dbReference>
<dbReference type="FunFam" id="3.30.300.20:FF:000003">
    <property type="entry name" value="GTPase Era"/>
    <property type="match status" value="1"/>
</dbReference>
<dbReference type="FunFam" id="3.40.50.300:FF:000094">
    <property type="entry name" value="GTPase Era"/>
    <property type="match status" value="1"/>
</dbReference>
<dbReference type="Gene3D" id="3.30.300.20">
    <property type="match status" value="1"/>
</dbReference>
<dbReference type="Gene3D" id="3.40.50.300">
    <property type="entry name" value="P-loop containing nucleotide triphosphate hydrolases"/>
    <property type="match status" value="1"/>
</dbReference>
<dbReference type="HAMAP" id="MF_00367">
    <property type="entry name" value="GTPase_Era"/>
    <property type="match status" value="1"/>
</dbReference>
<dbReference type="InterPro" id="IPR030388">
    <property type="entry name" value="G_ERA_dom"/>
</dbReference>
<dbReference type="InterPro" id="IPR006073">
    <property type="entry name" value="GTP-bd"/>
</dbReference>
<dbReference type="InterPro" id="IPR005662">
    <property type="entry name" value="GTPase_Era-like"/>
</dbReference>
<dbReference type="InterPro" id="IPR015946">
    <property type="entry name" value="KH_dom-like_a/b"/>
</dbReference>
<dbReference type="InterPro" id="IPR004044">
    <property type="entry name" value="KH_dom_type_2"/>
</dbReference>
<dbReference type="InterPro" id="IPR009019">
    <property type="entry name" value="KH_sf_prok-type"/>
</dbReference>
<dbReference type="InterPro" id="IPR027417">
    <property type="entry name" value="P-loop_NTPase"/>
</dbReference>
<dbReference type="InterPro" id="IPR005225">
    <property type="entry name" value="Small_GTP-bd"/>
</dbReference>
<dbReference type="NCBIfam" id="TIGR00436">
    <property type="entry name" value="era"/>
    <property type="match status" value="1"/>
</dbReference>
<dbReference type="NCBIfam" id="NF000908">
    <property type="entry name" value="PRK00089.1"/>
    <property type="match status" value="1"/>
</dbReference>
<dbReference type="NCBIfam" id="TIGR00231">
    <property type="entry name" value="small_GTP"/>
    <property type="match status" value="1"/>
</dbReference>
<dbReference type="PANTHER" id="PTHR42698">
    <property type="entry name" value="GTPASE ERA"/>
    <property type="match status" value="1"/>
</dbReference>
<dbReference type="PANTHER" id="PTHR42698:SF1">
    <property type="entry name" value="GTPASE ERA, MITOCHONDRIAL"/>
    <property type="match status" value="1"/>
</dbReference>
<dbReference type="Pfam" id="PF07650">
    <property type="entry name" value="KH_2"/>
    <property type="match status" value="1"/>
</dbReference>
<dbReference type="Pfam" id="PF01926">
    <property type="entry name" value="MMR_HSR1"/>
    <property type="match status" value="1"/>
</dbReference>
<dbReference type="SUPFAM" id="SSF52540">
    <property type="entry name" value="P-loop containing nucleoside triphosphate hydrolases"/>
    <property type="match status" value="1"/>
</dbReference>
<dbReference type="SUPFAM" id="SSF54814">
    <property type="entry name" value="Prokaryotic type KH domain (KH-domain type II)"/>
    <property type="match status" value="1"/>
</dbReference>
<dbReference type="PROSITE" id="PS51713">
    <property type="entry name" value="G_ERA"/>
    <property type="match status" value="1"/>
</dbReference>
<dbReference type="PROSITE" id="PS50823">
    <property type="entry name" value="KH_TYPE_2"/>
    <property type="match status" value="1"/>
</dbReference>
<organism>
    <name type="scientific">Salmonella paratyphi C (strain RKS4594)</name>
    <dbReference type="NCBI Taxonomy" id="476213"/>
    <lineage>
        <taxon>Bacteria</taxon>
        <taxon>Pseudomonadati</taxon>
        <taxon>Pseudomonadota</taxon>
        <taxon>Gammaproteobacteria</taxon>
        <taxon>Enterobacterales</taxon>
        <taxon>Enterobacteriaceae</taxon>
        <taxon>Salmonella</taxon>
    </lineage>
</organism>
<evidence type="ECO:0000255" key="1">
    <source>
        <dbReference type="HAMAP-Rule" id="MF_00367"/>
    </source>
</evidence>
<evidence type="ECO:0000255" key="2">
    <source>
        <dbReference type="PROSITE-ProRule" id="PRU01050"/>
    </source>
</evidence>
<proteinExistence type="inferred from homology"/>
<accession>C0PYG8</accession>
<keyword id="KW-0997">Cell inner membrane</keyword>
<keyword id="KW-1003">Cell membrane</keyword>
<keyword id="KW-0963">Cytoplasm</keyword>
<keyword id="KW-0342">GTP-binding</keyword>
<keyword id="KW-0472">Membrane</keyword>
<keyword id="KW-0547">Nucleotide-binding</keyword>
<keyword id="KW-0690">Ribosome biogenesis</keyword>
<keyword id="KW-0694">RNA-binding</keyword>
<keyword id="KW-0699">rRNA-binding</keyword>
<feature type="chain" id="PRO_1000189969" description="GTPase Era">
    <location>
        <begin position="1"/>
        <end position="301"/>
    </location>
</feature>
<feature type="domain" description="Era-type G" evidence="2">
    <location>
        <begin position="7"/>
        <end position="175"/>
    </location>
</feature>
<feature type="domain" description="KH type-2" evidence="1">
    <location>
        <begin position="206"/>
        <end position="283"/>
    </location>
</feature>
<feature type="region of interest" description="G1" evidence="2">
    <location>
        <begin position="15"/>
        <end position="22"/>
    </location>
</feature>
<feature type="region of interest" description="G2" evidence="2">
    <location>
        <begin position="41"/>
        <end position="45"/>
    </location>
</feature>
<feature type="region of interest" description="G3" evidence="2">
    <location>
        <begin position="62"/>
        <end position="65"/>
    </location>
</feature>
<feature type="region of interest" description="G4" evidence="2">
    <location>
        <begin position="124"/>
        <end position="127"/>
    </location>
</feature>
<feature type="region of interest" description="G5" evidence="2">
    <location>
        <begin position="154"/>
        <end position="156"/>
    </location>
</feature>
<feature type="binding site" evidence="1">
    <location>
        <begin position="15"/>
        <end position="22"/>
    </location>
    <ligand>
        <name>GTP</name>
        <dbReference type="ChEBI" id="CHEBI:37565"/>
    </ligand>
</feature>
<feature type="binding site" evidence="1">
    <location>
        <begin position="62"/>
        <end position="66"/>
    </location>
    <ligand>
        <name>GTP</name>
        <dbReference type="ChEBI" id="CHEBI:37565"/>
    </ligand>
</feature>
<feature type="binding site" evidence="1">
    <location>
        <begin position="124"/>
        <end position="127"/>
    </location>
    <ligand>
        <name>GTP</name>
        <dbReference type="ChEBI" id="CHEBI:37565"/>
    </ligand>
</feature>
<protein>
    <recommendedName>
        <fullName evidence="1">GTPase Era</fullName>
    </recommendedName>
</protein>
<gene>
    <name evidence="1" type="primary">era</name>
    <name type="ordered locus">SPC_1069</name>
</gene>
<name>ERA_SALPC</name>